<sequence length="436" mass="46762">MSDRQQVTNARGERIAIVAGLRTPFAKQATAFHGISALDMGKMVVNELLVRSELDPKLIEQLVYGQVVQMPAAPNIAREIVLGTGMDVSTDAYSVTRACATSFQSAVNVAESIMTGNIEIGIAGGADSSSVLPIGVSKKLAHALVDLNKARTFGQKLQIFRRLGIKDLLPVPPAVAEYSTGLSMGQTAEQMAKTYNISRADQDALAHRSHTLANETWASGHLRDEVMVAHVPPYKQFIERDNNIRENSDLASYAKLRPAFDKKHGSVTAANSTPLTDGASAIILMSEGRAKALGYQPIGYIKSYAFTAIDVWQDMLMGPSYATPLALKRAGMELEDLTLIEMHEAFAAQTLANMQMFASKKFAEEKLGRNRAIGDIDMSKFNVLGGSLAYGHPFAATGTRLITQVCRELKRRGGGTGLATACAAGGLGAAMIVEVE</sequence>
<name>FADI_SHEON</name>
<protein>
    <recommendedName>
        <fullName evidence="1">3-ketoacyl-CoA thiolase</fullName>
        <ecNumber evidence="1">2.3.1.16</ecNumber>
    </recommendedName>
    <alternativeName>
        <fullName evidence="1">ACSs</fullName>
    </alternativeName>
    <alternativeName>
        <fullName evidence="1">Acetyl-CoA acyltransferase</fullName>
    </alternativeName>
    <alternativeName>
        <fullName evidence="1">Acyl-CoA ligase</fullName>
    </alternativeName>
    <alternativeName>
        <fullName evidence="1">Beta-ketothiolase</fullName>
    </alternativeName>
    <alternativeName>
        <fullName evidence="1">Fatty acid oxidation complex subunit beta</fullName>
    </alternativeName>
</protein>
<evidence type="ECO:0000255" key="1">
    <source>
        <dbReference type="HAMAP-Rule" id="MF_01618"/>
    </source>
</evidence>
<keyword id="KW-0012">Acyltransferase</keyword>
<keyword id="KW-0963">Cytoplasm</keyword>
<keyword id="KW-0276">Fatty acid metabolism</keyword>
<keyword id="KW-0442">Lipid degradation</keyword>
<keyword id="KW-0443">Lipid metabolism</keyword>
<keyword id="KW-1185">Reference proteome</keyword>
<keyword id="KW-0808">Transferase</keyword>
<proteinExistence type="inferred from homology"/>
<accession>Q8ECP6</accession>
<organism>
    <name type="scientific">Shewanella oneidensis (strain ATCC 700550 / JCM 31522 / CIP 106686 / LMG 19005 / NCIMB 14063 / MR-1)</name>
    <dbReference type="NCBI Taxonomy" id="211586"/>
    <lineage>
        <taxon>Bacteria</taxon>
        <taxon>Pseudomonadati</taxon>
        <taxon>Pseudomonadota</taxon>
        <taxon>Gammaproteobacteria</taxon>
        <taxon>Alteromonadales</taxon>
        <taxon>Shewanellaceae</taxon>
        <taxon>Shewanella</taxon>
    </lineage>
</organism>
<reference key="1">
    <citation type="journal article" date="2002" name="Nat. Biotechnol.">
        <title>Genome sequence of the dissimilatory metal ion-reducing bacterium Shewanella oneidensis.</title>
        <authorList>
            <person name="Heidelberg J.F."/>
            <person name="Paulsen I.T."/>
            <person name="Nelson K.E."/>
            <person name="Gaidos E.J."/>
            <person name="Nelson W.C."/>
            <person name="Read T.D."/>
            <person name="Eisen J.A."/>
            <person name="Seshadri R."/>
            <person name="Ward N.L."/>
            <person name="Methe B.A."/>
            <person name="Clayton R.A."/>
            <person name="Meyer T."/>
            <person name="Tsapin A."/>
            <person name="Scott J."/>
            <person name="Beanan M.J."/>
            <person name="Brinkac L.M."/>
            <person name="Daugherty S.C."/>
            <person name="DeBoy R.T."/>
            <person name="Dodson R.J."/>
            <person name="Durkin A.S."/>
            <person name="Haft D.H."/>
            <person name="Kolonay J.F."/>
            <person name="Madupu R."/>
            <person name="Peterson J.D."/>
            <person name="Umayam L.A."/>
            <person name="White O."/>
            <person name="Wolf A.M."/>
            <person name="Vamathevan J.J."/>
            <person name="Weidman J.F."/>
            <person name="Impraim M."/>
            <person name="Lee K."/>
            <person name="Berry K.J."/>
            <person name="Lee C."/>
            <person name="Mueller J."/>
            <person name="Khouri H.M."/>
            <person name="Gill J."/>
            <person name="Utterback T.R."/>
            <person name="McDonald L.A."/>
            <person name="Feldblyum T.V."/>
            <person name="Smith H.O."/>
            <person name="Venter J.C."/>
            <person name="Nealson K.H."/>
            <person name="Fraser C.M."/>
        </authorList>
    </citation>
    <scope>NUCLEOTIDE SEQUENCE [LARGE SCALE GENOMIC DNA]</scope>
    <source>
        <strain>ATCC 700550 / JCM 31522 / CIP 106686 / LMG 19005 / NCIMB 14063 / MR-1</strain>
    </source>
</reference>
<gene>
    <name evidence="1" type="primary">fadI</name>
    <name type="ordered locus">SO_3089</name>
</gene>
<dbReference type="EC" id="2.3.1.16" evidence="1"/>
<dbReference type="EMBL" id="AE014299">
    <property type="protein sequence ID" value="AAN56096.1"/>
    <property type="molecule type" value="Genomic_DNA"/>
</dbReference>
<dbReference type="RefSeq" id="NP_718652.1">
    <property type="nucleotide sequence ID" value="NC_004347.2"/>
</dbReference>
<dbReference type="RefSeq" id="WP_011072986.1">
    <property type="nucleotide sequence ID" value="NZ_CP053946.1"/>
</dbReference>
<dbReference type="SMR" id="Q8ECP6"/>
<dbReference type="STRING" id="211586.SO_3089"/>
<dbReference type="PaxDb" id="211586-SO_3089"/>
<dbReference type="KEGG" id="son:SO_3089"/>
<dbReference type="PATRIC" id="fig|211586.12.peg.2985"/>
<dbReference type="eggNOG" id="COG0183">
    <property type="taxonomic scope" value="Bacteria"/>
</dbReference>
<dbReference type="HOGENOM" id="CLU_031026_2_0_6"/>
<dbReference type="OrthoDB" id="1402717at2"/>
<dbReference type="PhylomeDB" id="Q8ECP6"/>
<dbReference type="BioCyc" id="SONE211586:G1GMP-2860-MONOMER"/>
<dbReference type="UniPathway" id="UPA00659"/>
<dbReference type="Proteomes" id="UP000008186">
    <property type="component" value="Chromosome"/>
</dbReference>
<dbReference type="GO" id="GO:0005829">
    <property type="term" value="C:cytosol"/>
    <property type="evidence" value="ECO:0000318"/>
    <property type="project" value="GO_Central"/>
</dbReference>
<dbReference type="GO" id="GO:0003985">
    <property type="term" value="F:acetyl-CoA C-acetyltransferase activity"/>
    <property type="evidence" value="ECO:0000318"/>
    <property type="project" value="GO_Central"/>
</dbReference>
<dbReference type="GO" id="GO:0006635">
    <property type="term" value="P:fatty acid beta-oxidation"/>
    <property type="evidence" value="ECO:0007669"/>
    <property type="project" value="UniProtKB-UniRule"/>
</dbReference>
<dbReference type="CDD" id="cd00751">
    <property type="entry name" value="thiolase"/>
    <property type="match status" value="1"/>
</dbReference>
<dbReference type="FunFam" id="3.40.47.10:FF:000011">
    <property type="entry name" value="3-ketoacyl-CoA thiolase"/>
    <property type="match status" value="1"/>
</dbReference>
<dbReference type="Gene3D" id="3.40.47.10">
    <property type="match status" value="1"/>
</dbReference>
<dbReference type="HAMAP" id="MF_01618">
    <property type="entry name" value="FadI"/>
    <property type="match status" value="1"/>
</dbReference>
<dbReference type="InterPro" id="IPR012806">
    <property type="entry name" value="Ac-CoA_C-AcTrfase_FadI"/>
</dbReference>
<dbReference type="InterPro" id="IPR002155">
    <property type="entry name" value="Thiolase"/>
</dbReference>
<dbReference type="InterPro" id="IPR016039">
    <property type="entry name" value="Thiolase-like"/>
</dbReference>
<dbReference type="InterPro" id="IPR020610">
    <property type="entry name" value="Thiolase_AS"/>
</dbReference>
<dbReference type="InterPro" id="IPR020617">
    <property type="entry name" value="Thiolase_C"/>
</dbReference>
<dbReference type="InterPro" id="IPR020613">
    <property type="entry name" value="Thiolase_CS"/>
</dbReference>
<dbReference type="InterPro" id="IPR020616">
    <property type="entry name" value="Thiolase_N"/>
</dbReference>
<dbReference type="NCBIfam" id="TIGR01930">
    <property type="entry name" value="AcCoA-C-Actrans"/>
    <property type="match status" value="1"/>
</dbReference>
<dbReference type="NCBIfam" id="TIGR02446">
    <property type="entry name" value="FadI"/>
    <property type="match status" value="1"/>
</dbReference>
<dbReference type="NCBIfam" id="NF006516">
    <property type="entry name" value="PRK08963.1"/>
    <property type="match status" value="1"/>
</dbReference>
<dbReference type="PANTHER" id="PTHR18919:SF107">
    <property type="entry name" value="ACETYL-COA ACETYLTRANSFERASE, CYTOSOLIC"/>
    <property type="match status" value="1"/>
</dbReference>
<dbReference type="PANTHER" id="PTHR18919">
    <property type="entry name" value="ACETYL-COA C-ACYLTRANSFERASE"/>
    <property type="match status" value="1"/>
</dbReference>
<dbReference type="Pfam" id="PF02803">
    <property type="entry name" value="Thiolase_C"/>
    <property type="match status" value="1"/>
</dbReference>
<dbReference type="Pfam" id="PF00108">
    <property type="entry name" value="Thiolase_N"/>
    <property type="match status" value="1"/>
</dbReference>
<dbReference type="PIRSF" id="PIRSF000429">
    <property type="entry name" value="Ac-CoA_Ac_transf"/>
    <property type="match status" value="1"/>
</dbReference>
<dbReference type="SUPFAM" id="SSF53901">
    <property type="entry name" value="Thiolase-like"/>
    <property type="match status" value="2"/>
</dbReference>
<dbReference type="PROSITE" id="PS00737">
    <property type="entry name" value="THIOLASE_2"/>
    <property type="match status" value="1"/>
</dbReference>
<dbReference type="PROSITE" id="PS00099">
    <property type="entry name" value="THIOLASE_3"/>
    <property type="match status" value="1"/>
</dbReference>
<feature type="chain" id="PRO_0000206447" description="3-ketoacyl-CoA thiolase">
    <location>
        <begin position="1"/>
        <end position="436"/>
    </location>
</feature>
<feature type="active site" description="Acyl-thioester intermediate" evidence="1">
    <location>
        <position position="99"/>
    </location>
</feature>
<feature type="active site" description="Proton acceptor" evidence="1">
    <location>
        <position position="392"/>
    </location>
</feature>
<feature type="active site" description="Proton acceptor" evidence="1">
    <location>
        <position position="422"/>
    </location>
</feature>
<comment type="function">
    <text evidence="1">Catalyzes the final step of fatty acid oxidation in which acetyl-CoA is released and the CoA ester of a fatty acid two carbons shorter is formed.</text>
</comment>
<comment type="catalytic activity">
    <reaction evidence="1">
        <text>an acyl-CoA + acetyl-CoA = a 3-oxoacyl-CoA + CoA</text>
        <dbReference type="Rhea" id="RHEA:21564"/>
        <dbReference type="ChEBI" id="CHEBI:57287"/>
        <dbReference type="ChEBI" id="CHEBI:57288"/>
        <dbReference type="ChEBI" id="CHEBI:58342"/>
        <dbReference type="ChEBI" id="CHEBI:90726"/>
        <dbReference type="EC" id="2.3.1.16"/>
    </reaction>
</comment>
<comment type="pathway">
    <text evidence="1">Lipid metabolism; fatty acid beta-oxidation.</text>
</comment>
<comment type="subunit">
    <text evidence="1">Heterotetramer of two alpha chains (FadJ) and two beta chains (FadI).</text>
</comment>
<comment type="subcellular location">
    <subcellularLocation>
        <location evidence="1">Cytoplasm</location>
    </subcellularLocation>
</comment>
<comment type="similarity">
    <text evidence="1">Belongs to the thiolase-like superfamily. Thiolase family.</text>
</comment>